<name>MEN2_EUPNO</name>
<feature type="chain" id="PRO_0000186200" description="Mating pheromone En-2">
    <location>
        <begin position="1"/>
        <end position="60"/>
    </location>
</feature>
<feature type="disulfide bond" evidence="2">
    <location>
        <begin position="11"/>
        <end position="39"/>
    </location>
</feature>
<feature type="disulfide bond" evidence="2">
    <location>
        <begin position="24"/>
        <end position="35"/>
    </location>
</feature>
<feature type="disulfide bond" evidence="2">
    <location>
        <begin position="31"/>
        <end position="57"/>
    </location>
</feature>
<feature type="disulfide bond" evidence="2">
    <location>
        <begin position="36"/>
        <end position="48"/>
    </location>
</feature>
<feature type="helix" evidence="3">
    <location>
        <begin position="3"/>
        <end position="5"/>
    </location>
</feature>
<feature type="turn" evidence="3">
    <location>
        <begin position="8"/>
        <end position="10"/>
    </location>
</feature>
<feature type="helix" evidence="3">
    <location>
        <begin position="17"/>
        <end position="24"/>
    </location>
</feature>
<feature type="strand" evidence="3">
    <location>
        <begin position="27"/>
        <end position="30"/>
    </location>
</feature>
<feature type="helix" evidence="3">
    <location>
        <begin position="35"/>
        <end position="37"/>
    </location>
</feature>
<feature type="turn" evidence="3">
    <location>
        <begin position="42"/>
        <end position="44"/>
    </location>
</feature>
<feature type="helix" evidence="3">
    <location>
        <begin position="45"/>
        <end position="48"/>
    </location>
</feature>
<feature type="strand" evidence="3">
    <location>
        <begin position="54"/>
        <end position="58"/>
    </location>
</feature>
<keyword id="KW-0002">3D-structure</keyword>
<keyword id="KW-0903">Direct protein sequencing</keyword>
<keyword id="KW-1015">Disulfide bond</keyword>
<keyword id="KW-0588">Pheromone</keyword>
<keyword id="KW-0964">Secreted</keyword>
<comment type="function">
    <text>Mating ciliate pheromones (or gamones) are diffusible extracellular communication signals that distinguish different intraspecific classes of cells commonly referred to as 'mating types'. They prepare the latter for conjugation by changing their cell surface properties.</text>
</comment>
<comment type="subcellular location">
    <subcellularLocation>
        <location evidence="1">Secreted</location>
    </subcellularLocation>
</comment>
<comment type="mass spectrometry" mass="6298.92" method="MALDI" evidence="1"/>
<protein>
    <recommendedName>
        <fullName>Mating pheromone En-2</fullName>
    </recommendedName>
</protein>
<proteinExistence type="evidence at protein level"/>
<accession>P83235</accession>
<reference key="1">
    <citation type="journal article" date="2002" name="FEBS Lett.">
        <title>Structural characterization of a protein pheromone from a cold-adapted (Antarctic) single-cell eukaryote, the ciliate Euplotes nobilii.</title>
        <authorList>
            <person name="Alimenti C."/>
            <person name="Ortenzi C."/>
            <person name="Carratore V."/>
            <person name="Luporini P."/>
        </authorList>
    </citation>
    <scope>PROTEIN SEQUENCE</scope>
    <scope>SUBCELLULAR LOCATION</scope>
    <scope>MASS SPECTROMETRY</scope>
    <source>
        <strain>AC-1</strain>
    </source>
</reference>
<reference key="2">
    <citation type="journal article" date="2009" name="IUBMB Life">
        <title>Molecular cold-adaptation: comparative analysis of two homologous families of psychrophilic and mesophilic signal proteins of the protozoan ciliate, Euplotes.</title>
        <authorList>
            <person name="Alimenti C."/>
            <person name="Vallesi A."/>
            <person name="Pedrini B."/>
            <person name="Wuthrich K."/>
            <person name="Luporini P."/>
        </authorList>
    </citation>
    <scope>STRUCTURE BY NMR</scope>
    <scope>DISULFIDE BONDS</scope>
</reference>
<dbReference type="PDB" id="2NSW">
    <property type="method" value="NMR"/>
    <property type="chains" value="A=1-60"/>
</dbReference>
<dbReference type="PDBsum" id="2NSW"/>
<dbReference type="BMRB" id="P83235"/>
<dbReference type="SMR" id="P83235"/>
<dbReference type="EvolutionaryTrace" id="P83235"/>
<dbReference type="GO" id="GO:0005576">
    <property type="term" value="C:extracellular region"/>
    <property type="evidence" value="ECO:0007669"/>
    <property type="project" value="UniProtKB-SubCell"/>
</dbReference>
<dbReference type="GO" id="GO:0005186">
    <property type="term" value="F:pheromone activity"/>
    <property type="evidence" value="ECO:0007669"/>
    <property type="project" value="UniProtKB-KW"/>
</dbReference>
<dbReference type="Gene3D" id="1.20.50.40">
    <property type="match status" value="1"/>
</dbReference>
<organism>
    <name type="scientific">Euplotes nobilii</name>
    <name type="common">Ciliate</name>
    <dbReference type="NCBI Taxonomy" id="184062"/>
    <lineage>
        <taxon>Eukaryota</taxon>
        <taxon>Sar</taxon>
        <taxon>Alveolata</taxon>
        <taxon>Ciliophora</taxon>
        <taxon>Intramacronucleata</taxon>
        <taxon>Spirotrichea</taxon>
        <taxon>Hypotrichia</taxon>
        <taxon>Euplotida</taxon>
        <taxon>Euplotidae</taxon>
        <taxon>Euplotes</taxon>
    </lineage>
</organism>
<sequence length="60" mass="6304">DIEDFYTSETCPYKNDSQLAWDTCSGGTGNCGTVCCGQCFSFPVSQSCAGMADSNDCPNA</sequence>
<evidence type="ECO:0000269" key="1">
    <source>
    </source>
</evidence>
<evidence type="ECO:0000269" key="2">
    <source>
    </source>
</evidence>
<evidence type="ECO:0007829" key="3">
    <source>
        <dbReference type="PDB" id="2NSW"/>
    </source>
</evidence>